<accession>A1XIQ1</accession>
<proteinExistence type="inferred from homology"/>
<sequence>MMMSSVAGQRKGPSDKSAAVSEQLIAQITAAVEAGNKNLLRKLGMGSYGILYGAQEKKAMELFDPEDVHNITSLWSSFKKTFTSSRDHGNLFFHLYGVMFFMVPHVHGGEGSVKISLCSSNDPTNPVLQEKVLYFSGGAQAVLMSPTITLPFVKRGPMFYYTMECLGTRAQIPCSVVAIWKQKIDIRSAIYSKQETMSWAIEALHRPQFFQDRQEAAQYISSVYSNATSSATDSVLPFVGAQLGDTKMNVPSEARMIRSSSLRVPMLKVQSKRFSSMEIPSTSTAHLLGTTRDETVIQEESRYEEEGDDGVLFPVKKAQGLNYSHVWDNLGIESFVDVELPENWDELSVRQQVAAAMIAFANKGVCLVPKHIINRDKHNIHLENITEHNYLVILERYGIVNAGSLARTENWYNLTLAQRVEELIYQRDDAYFMFGDNTNPYPPFDCYDGLTLKVRSELERVAKEQARQRFYKEAARAQVKNKVAQTSVEEIPSTSFATKVAMESGSVDSMKIAIQAEAANEAVRPNEVMFEFGQEMNNEGATELELQQPACVASNSFFNVGVFEFAWKKSSSVAAEVLSLALPAALFGKSKEMSMGSQMLRYYDAALIMYKVILYISGMGAISGQLALVWDECNVLNRKKEFINIASLYASKHRLVSASEQSSGEFCFTPTGIGKFVPLDPASGAYDLGSIRVFVTHPLASATELESIPCHIHLQCKVLSTNIMQPPRLRAQAQFGMKPDQTHFPRFPTNQVLLHYNWGVAASMGTTLVSIFSPSGIYESDGTLQPSLLGNIARNCKWWTGTCVFEICIEKTQFHSGSLAIGLGTLNTSMSTPHDILNMPHVICNLEMGRKFYFRCTITNWNGKNLLTTGRKSSLPRPKHMSHMRLFATVLKPLVSTSIHLDTVGVTVQLKCIEDLVLGGTVSVKPIYGHWTKGKNAVDFLFSEMDLSQRKEIEKLRKENVETFDEKGKKQPQVQVPLRDKFSYGAVQYFVMNWKDEERLLVLPCAPWSVRFPQGALVQEAITCPFIDWCSSFCYWSGSLEYTIIVHRVQTSNNIGGVLNITLDSSGYPFPLGISKGTYVVSAGGGAKWAFTYGMSDNIFSFVVHDDEFFPRRHTKARAIDPNASRIMTLQDRLGNLIINLPAKDVISSLEILVKPGPDFKLQLAQAPSANHEKHLGDMQTHTYLYTPDFSELRSFEN</sequence>
<keyword id="KW-0167">Capsid protein</keyword>
<keyword id="KW-1031">Host cell junction</keyword>
<keyword id="KW-1185">Reference proteome</keyword>
<keyword id="KW-0813">Transport</keyword>
<keyword id="KW-0916">Viral movement protein</keyword>
<keyword id="KW-0946">Virion</keyword>
<protein>
    <recommendedName>
        <fullName>RNA2 polyprotein</fullName>
    </recommendedName>
    <component>
        <recommendedName>
            <fullName>Movement protein</fullName>
        </recommendedName>
    </component>
    <component>
        <recommendedName>
            <fullName>Capsid protein VP35</fullName>
        </recommendedName>
    </component>
    <component>
        <recommendedName>
            <fullName>Capsid protein VP26</fullName>
        </recommendedName>
    </component>
    <component>
        <recommendedName>
            <fullName>Capsid protein VP23</fullName>
        </recommendedName>
    </component>
</protein>
<comment type="function">
    <molecule>Movement protein</molecule>
    <text evidence="1">Transports viral genome to neighboring plant cells directly through plasmosdesmata, without any budding. The movement protein allows efficient cell to cell propagation, by bypassing the host cell wall barrier. Acts by forming a tubular structure at the host plasmodesmata, enlarging it enough to allow free passage of virion capsids (By similarity).</text>
</comment>
<comment type="function">
    <text evidence="3">Capsid proteins VP35, VP26, and VP23 form a capsid enclosing the viral positive strand RNA genome. Together they form an icosahedral capsid pseudo T=3 with a diameter of approximately 30 nm (Potential).</text>
</comment>
<comment type="subcellular location">
    <molecule>Movement protein</molecule>
    <subcellularLocation>
        <location>Host cell junction</location>
    </subcellularLocation>
    <subcellularLocation>
        <location>Host cell junction</location>
        <location>Host plasmodesma</location>
    </subcellularLocation>
</comment>
<comment type="subcellular location">
    <molecule>Capsid protein VP35</molecule>
    <subcellularLocation>
        <location evidence="3">Virion</location>
    </subcellularLocation>
</comment>
<comment type="subcellular location">
    <molecule>Capsid protein VP26</molecule>
    <subcellularLocation>
        <location evidence="3">Virion</location>
    </subcellularLocation>
</comment>
<comment type="subcellular location">
    <molecule>Capsid protein VP23</molecule>
    <subcellularLocation>
        <location evidence="3">Virion</location>
    </subcellularLocation>
</comment>
<comment type="PTM">
    <text evidence="1">Specific enzymatic cleavages in vivo by the P1 encoded 3C-like protease yield mature proteins.</text>
</comment>
<name>POL2_TOTV</name>
<feature type="chain" id="PRO_5000214035" description="Movement protein" evidence="2">
    <location>
        <begin position="1"/>
        <end position="449" status="uncertain"/>
    </location>
</feature>
<feature type="chain" id="PRO_5000214036" description="Capsid protein VP35" evidence="2">
    <location>
        <begin position="450" status="uncertain"/>
        <end position="732" status="uncertain"/>
    </location>
</feature>
<feature type="chain" id="PRO_5000214037" description="Capsid protein VP26" evidence="2">
    <location>
        <begin position="733" status="uncertain"/>
        <end position="974" status="uncertain"/>
    </location>
</feature>
<feature type="chain" id="PRO_5000214038" description="Capsid protein VP23" evidence="2">
    <location>
        <begin position="975" status="uncertain"/>
        <end position="1198"/>
    </location>
</feature>
<reference key="1">
    <citation type="journal article" date="2007" name="Arch. Virol.">
        <title>Identification and characterisation of tomato torrado virus, a new plant picorna-like virus from tomato.</title>
        <authorList>
            <person name="Verbeek M."/>
            <person name="Dullemans A.M."/>
            <person name="van den Heuvel J.F."/>
            <person name="Maris P.C."/>
            <person name="van der Vlugt R.A."/>
        </authorList>
    </citation>
    <scope>NUCLEOTIDE SEQUENCE [GENOMIC RNA]</scope>
</reference>
<evidence type="ECO:0000250" key="1"/>
<evidence type="ECO:0000255" key="2"/>
<evidence type="ECO:0000305" key="3"/>
<organism>
    <name type="scientific">Tomato torrado virus (isolate Solanum lycopersicum/Spain/PRIToTV0301/-)</name>
    <name type="common">ToTV</name>
    <dbReference type="NCBI Taxonomy" id="686948"/>
    <lineage>
        <taxon>Viruses</taxon>
        <taxon>Riboviria</taxon>
        <taxon>Orthornavirae</taxon>
        <taxon>Pisuviricota</taxon>
        <taxon>Pisoniviricetes</taxon>
        <taxon>Picornavirales</taxon>
        <taxon>Secoviridae</taxon>
        <taxon>Torradovirus</taxon>
        <taxon>Torradovirus lycopersici</taxon>
    </lineage>
</organism>
<organismHost>
    <name type="scientific">Capsicum annuum</name>
    <name type="common">Capsicum pepper</name>
    <dbReference type="NCBI Taxonomy" id="4072"/>
</organismHost>
<organismHost>
    <name type="scientific">Nicotiana tabacum</name>
    <name type="common">Common tobacco</name>
    <dbReference type="NCBI Taxonomy" id="4097"/>
</organismHost>
<organismHost>
    <name type="scientific">Solanum lycopersicum</name>
    <name type="common">Tomato</name>
    <name type="synonym">Lycopersicon esculentum</name>
    <dbReference type="NCBI Taxonomy" id="4081"/>
</organismHost>
<organismHost>
    <name type="scientific">Solanum melongena</name>
    <name type="common">eggplant</name>
    <dbReference type="NCBI Taxonomy" id="4111"/>
</organismHost>
<organismHost>
    <name type="scientific">Solanum tuberosum</name>
    <name type="common">Potato</name>
    <dbReference type="NCBI Taxonomy" id="4113"/>
</organismHost>
<dbReference type="EMBL" id="DQ388880">
    <property type="protein sequence ID" value="ABD38936.1"/>
    <property type="molecule type" value="Genomic_RNA"/>
</dbReference>
<dbReference type="RefSeq" id="YP_001040018.1">
    <property type="nucleotide sequence ID" value="NC_009032.1"/>
</dbReference>
<dbReference type="SMR" id="A1XIQ1"/>
<dbReference type="GeneID" id="5130565"/>
<dbReference type="KEGG" id="vg:5130565"/>
<dbReference type="Proteomes" id="UP000000825">
    <property type="component" value="Genome"/>
</dbReference>
<dbReference type="GO" id="GO:0044219">
    <property type="term" value="C:host cell plasmodesma"/>
    <property type="evidence" value="ECO:0007669"/>
    <property type="project" value="UniProtKB-SubCell"/>
</dbReference>
<dbReference type="GO" id="GO:0019028">
    <property type="term" value="C:viral capsid"/>
    <property type="evidence" value="ECO:0007669"/>
    <property type="project" value="UniProtKB-KW"/>
</dbReference>
<dbReference type="GO" id="GO:0046740">
    <property type="term" value="P:transport of virus in host, cell to cell"/>
    <property type="evidence" value="ECO:0007669"/>
    <property type="project" value="UniProtKB-KW"/>
</dbReference>
<dbReference type="Gene3D" id="2.60.120.20">
    <property type="match status" value="2"/>
</dbReference>
<dbReference type="InterPro" id="IPR000603">
    <property type="entry name" value="MPV"/>
</dbReference>
<dbReference type="InterPro" id="IPR029053">
    <property type="entry name" value="Viral_coat"/>
</dbReference>
<dbReference type="Pfam" id="PF00803">
    <property type="entry name" value="3A"/>
    <property type="match status" value="1"/>
</dbReference>
<dbReference type="SUPFAM" id="SSF88633">
    <property type="entry name" value="Positive stranded ssRNA viruses"/>
    <property type="match status" value="1"/>
</dbReference>